<sequence length="341" mass="39427">MLEEEILQKLQKFGLTKYESLAYLTLLKLGPSKATDVTKESGIPHTRIYDVLSSLARKGFVDIVHGTPRLYAPVNPEIVLEKIREDLISDIERLKKAFQELYREVHGEELPEIWTVHGFENTIDRAQHIIRSAKHDILINTPYEFLEYLRGVLEKRNDVLIIVISNFSEIPLWLRNKNNVILARSGQAPWLLGTWVIGDINYALFFGTLPEDKGKERFYSFWVKSTRLIQNYVHWFYTMYFDNSEIVKPLNYERMEKPLTLSHIRTVITVLKQAGLPRNIEVIGRSLADKKQVTIKGKVIDYEYTPLTANITVKTDNKKIKVGGLGSYLEDIEGESFILLD</sequence>
<proteinExistence type="evidence at protein level"/>
<feature type="chain" id="PRO_0000428840" description="HTH-type sugar sensing transcriptional regulator TrmBL1">
    <location>
        <begin position="1"/>
        <end position="341"/>
    </location>
</feature>
<feature type="DNA-binding region" description="H-T-H motif" evidence="2">
    <location>
        <begin position="32"/>
        <end position="53"/>
    </location>
</feature>
<feature type="mutagenesis site" description="Loss of DNA-binding." evidence="3">
    <original>Y</original>
    <variation>N</variation>
    <location>
        <position position="49"/>
    </location>
</feature>
<feature type="mutagenesis site" description="Decreases DNA-binding." evidence="3">
    <original>D</original>
    <variation>N</variation>
    <location>
        <position position="50"/>
    </location>
</feature>
<dbReference type="EMBL" id="AE009950">
    <property type="protein sequence ID" value="AAL80248.1"/>
    <property type="molecule type" value="Genomic_DNA"/>
</dbReference>
<dbReference type="RefSeq" id="WP_011011236.1">
    <property type="nucleotide sequence ID" value="NZ_CP023154.1"/>
</dbReference>
<dbReference type="SMR" id="Q8U4G4"/>
<dbReference type="IntAct" id="Q8U4G4">
    <property type="interactions" value="1"/>
</dbReference>
<dbReference type="STRING" id="186497.PF0124"/>
<dbReference type="PaxDb" id="186497-PF0124"/>
<dbReference type="GeneID" id="41711911"/>
<dbReference type="KEGG" id="pfu:PF0124"/>
<dbReference type="PATRIC" id="fig|186497.12.peg.129"/>
<dbReference type="eggNOG" id="arCOG02038">
    <property type="taxonomic scope" value="Archaea"/>
</dbReference>
<dbReference type="HOGENOM" id="CLU_062979_2_0_2"/>
<dbReference type="OrthoDB" id="30795at2157"/>
<dbReference type="PhylomeDB" id="Q8U4G4"/>
<dbReference type="Proteomes" id="UP000001013">
    <property type="component" value="Chromosome"/>
</dbReference>
<dbReference type="GO" id="GO:0003677">
    <property type="term" value="F:DNA binding"/>
    <property type="evidence" value="ECO:0007669"/>
    <property type="project" value="UniProtKB-KW"/>
</dbReference>
<dbReference type="CDD" id="cd09124">
    <property type="entry name" value="PLDc_like_TrmB_middle"/>
    <property type="match status" value="1"/>
</dbReference>
<dbReference type="Gene3D" id="1.10.10.10">
    <property type="entry name" value="Winged helix-like DNA-binding domain superfamily/Winged helix DNA-binding domain"/>
    <property type="match status" value="1"/>
</dbReference>
<dbReference type="InterPro" id="IPR051797">
    <property type="entry name" value="TrmB-like"/>
</dbReference>
<dbReference type="InterPro" id="IPR021586">
    <property type="entry name" value="Tscrpt_reg_TrmB_C"/>
</dbReference>
<dbReference type="InterPro" id="IPR002831">
    <property type="entry name" value="Tscrpt_reg_TrmB_N"/>
</dbReference>
<dbReference type="InterPro" id="IPR036388">
    <property type="entry name" value="WH-like_DNA-bd_sf"/>
</dbReference>
<dbReference type="InterPro" id="IPR036390">
    <property type="entry name" value="WH_DNA-bd_sf"/>
</dbReference>
<dbReference type="NCBIfam" id="NF047390">
    <property type="entry name" value="TransRegTrmBL1"/>
    <property type="match status" value="1"/>
</dbReference>
<dbReference type="PANTHER" id="PTHR34293">
    <property type="entry name" value="HTH-TYPE TRANSCRIPTIONAL REGULATOR TRMBL2"/>
    <property type="match status" value="1"/>
</dbReference>
<dbReference type="PANTHER" id="PTHR34293:SF1">
    <property type="entry name" value="HTH-TYPE TRANSCRIPTIONAL REGULATOR TRMBL2"/>
    <property type="match status" value="1"/>
</dbReference>
<dbReference type="Pfam" id="PF11495">
    <property type="entry name" value="Regulator_TrmB"/>
    <property type="match status" value="1"/>
</dbReference>
<dbReference type="Pfam" id="PF01978">
    <property type="entry name" value="TrmB"/>
    <property type="match status" value="1"/>
</dbReference>
<dbReference type="SUPFAM" id="SSF159071">
    <property type="entry name" value="TrmB C-terminal domain-like"/>
    <property type="match status" value="1"/>
</dbReference>
<dbReference type="SUPFAM" id="SSF46785">
    <property type="entry name" value="Winged helix' DNA-binding domain"/>
    <property type="match status" value="1"/>
</dbReference>
<organism>
    <name type="scientific">Pyrococcus furiosus (strain ATCC 43587 / DSM 3638 / JCM 8422 / Vc1)</name>
    <dbReference type="NCBI Taxonomy" id="186497"/>
    <lineage>
        <taxon>Archaea</taxon>
        <taxon>Methanobacteriati</taxon>
        <taxon>Methanobacteriota</taxon>
        <taxon>Thermococci</taxon>
        <taxon>Thermococcales</taxon>
        <taxon>Thermococcaceae</taxon>
        <taxon>Pyrococcus</taxon>
    </lineage>
</organism>
<reference key="1">
    <citation type="journal article" date="1999" name="Genetics">
        <title>Divergence of the hyperthermophilic archaea Pyrococcus furiosus and P. horikoshii inferred from complete genomic sequences.</title>
        <authorList>
            <person name="Maeder D.L."/>
            <person name="Weiss R.B."/>
            <person name="Dunn D.M."/>
            <person name="Cherry J.L."/>
            <person name="Gonzalez J.M."/>
            <person name="DiRuggiero J."/>
            <person name="Robb F.T."/>
        </authorList>
    </citation>
    <scope>NUCLEOTIDE SEQUENCE [LARGE SCALE GENOMIC DNA]</scope>
    <source>
        <strain>ATCC 43587 / DSM 3638 / JCM 8422 / Vc1</strain>
    </source>
</reference>
<reference key="2">
    <citation type="journal article" date="2007" name="Mol. Microbiol.">
        <title>Characterization of the TrmB-like protein, PF0124, a TGM-recognizing global transcriptional regulator of the hyperthermophilic archaeon Pyrococcus furiosus.</title>
        <authorList>
            <person name="Lee S.J."/>
            <person name="Surma M."/>
            <person name="Seitz S."/>
            <person name="Hausner W."/>
            <person name="Thomm M."/>
            <person name="Boos W."/>
        </authorList>
    </citation>
    <scope>FUNCTION</scope>
    <scope>DNA-BINDING</scope>
    <scope>ACTIVITY REGULATION</scope>
    <scope>SUBUNIT</scope>
    <scope>INDUCTION</scope>
    <scope>GENE NAME</scope>
    <scope>MUTAGENESIS OF TYR-49 AND ASP-50</scope>
</reference>
<name>TMBL1_PYRFU</name>
<protein>
    <recommendedName>
        <fullName>HTH-type sugar sensing transcriptional regulator TrmBL1</fullName>
    </recommendedName>
</protein>
<keyword id="KW-0238">DNA-binding</keyword>
<keyword id="KW-1185">Reference proteome</keyword>
<keyword id="KW-0678">Repressor</keyword>
<keyword id="KW-0804">Transcription</keyword>
<keyword id="KW-0805">Transcription regulation</keyword>
<evidence type="ECO:0000250" key="1"/>
<evidence type="ECO:0000255" key="2"/>
<evidence type="ECO:0000269" key="3">
    <source>
    </source>
</evidence>
<evidence type="ECO:0000305" key="4"/>
<comment type="function">
    <text evidence="3">Global transcriptional repressor of the maltodextrin transport gene cluster (mdxE operon) and most likely of all genes encoding glycolytic enzymes. Acts by binding to the conserved TGM (Thermococcales-Glycolytic-Motif) sequences in their promoter region. Can also interact with non-TGM sequences.</text>
</comment>
<comment type="activity regulation">
    <text evidence="3">Repressor activity is regulated by binding of different sugars to TrmBL1. Binding of maltose and maltotriose results in derepression of the target genes. However, high sugar concentration results in formation of octamers with high affinity for DNA, which may prevent transcription of target genes.</text>
</comment>
<comment type="subunit">
    <text evidence="3">Homotetramer. Forms homooctamers in the presence of maltotriose or maltose.</text>
</comment>
<comment type="induction">
    <text evidence="3">Autoregulated.</text>
</comment>
<comment type="domain">
    <text evidence="1">Contains an N-terminal DNA-binding domain and a C-terminal sugar-binding domain.</text>
</comment>
<comment type="similarity">
    <text evidence="4">Belongs to the transcriptional regulator TrmB family.</text>
</comment>
<accession>Q8U4G4</accession>
<gene>
    <name type="primary">trmBL1</name>
    <name type="ordered locus">PF0124</name>
</gene>